<accession>A1TSK5</accession>
<reference key="1">
    <citation type="submission" date="2006-12" db="EMBL/GenBank/DDBJ databases">
        <title>Complete sequence of Acidovorax avenae subsp. citrulli AAC00-1.</title>
        <authorList>
            <person name="Copeland A."/>
            <person name="Lucas S."/>
            <person name="Lapidus A."/>
            <person name="Barry K."/>
            <person name="Detter J.C."/>
            <person name="Glavina del Rio T."/>
            <person name="Dalin E."/>
            <person name="Tice H."/>
            <person name="Pitluck S."/>
            <person name="Kiss H."/>
            <person name="Brettin T."/>
            <person name="Bruce D."/>
            <person name="Han C."/>
            <person name="Tapia R."/>
            <person name="Gilna P."/>
            <person name="Schmutz J."/>
            <person name="Larimer F."/>
            <person name="Land M."/>
            <person name="Hauser L."/>
            <person name="Kyrpides N."/>
            <person name="Kim E."/>
            <person name="Stahl D."/>
            <person name="Richardson P."/>
        </authorList>
    </citation>
    <scope>NUCLEOTIDE SEQUENCE [LARGE SCALE GENOMIC DNA]</scope>
    <source>
        <strain>AAC00-1</strain>
    </source>
</reference>
<name>RIMP_PARC0</name>
<feature type="chain" id="PRO_1000136720" description="Ribosome maturation factor RimP">
    <location>
        <begin position="1"/>
        <end position="202"/>
    </location>
</feature>
<sequence>MALQQIVEQTVAGLGYDLVEIERSAGGLLRITIDLPWQPPVEGAASDAAAPAGPEAFVTVEDCEKVTRQLQFALEVDGVDYKRLEVSSPGIDRPLRHEQDFQRFAGEVIDITLKAPIGDAAAGQVNANRKKFRGTLERAETGGWQIVWSDEPPPKPGQKVSKKRVPAPLQALGFTLDELRDARLAPIVDFKGRGPKGGPAPD</sequence>
<proteinExistence type="inferred from homology"/>
<organism>
    <name type="scientific">Paracidovorax citrulli (strain AAC00-1)</name>
    <name type="common">Acidovorax citrulli</name>
    <dbReference type="NCBI Taxonomy" id="397945"/>
    <lineage>
        <taxon>Bacteria</taxon>
        <taxon>Pseudomonadati</taxon>
        <taxon>Pseudomonadota</taxon>
        <taxon>Betaproteobacteria</taxon>
        <taxon>Burkholderiales</taxon>
        <taxon>Comamonadaceae</taxon>
        <taxon>Paracidovorax</taxon>
    </lineage>
</organism>
<evidence type="ECO:0000255" key="1">
    <source>
        <dbReference type="HAMAP-Rule" id="MF_01077"/>
    </source>
</evidence>
<protein>
    <recommendedName>
        <fullName evidence="1">Ribosome maturation factor RimP</fullName>
    </recommendedName>
</protein>
<dbReference type="EMBL" id="CP000512">
    <property type="protein sequence ID" value="ABM33943.1"/>
    <property type="molecule type" value="Genomic_DNA"/>
</dbReference>
<dbReference type="RefSeq" id="WP_011796444.1">
    <property type="nucleotide sequence ID" value="NC_008752.1"/>
</dbReference>
<dbReference type="SMR" id="A1TSK5"/>
<dbReference type="STRING" id="397945.Aave_3385"/>
<dbReference type="GeneID" id="79793074"/>
<dbReference type="KEGG" id="aav:Aave_3385"/>
<dbReference type="eggNOG" id="COG0779">
    <property type="taxonomic scope" value="Bacteria"/>
</dbReference>
<dbReference type="HOGENOM" id="CLU_070525_1_0_4"/>
<dbReference type="OrthoDB" id="9805006at2"/>
<dbReference type="Proteomes" id="UP000002596">
    <property type="component" value="Chromosome"/>
</dbReference>
<dbReference type="GO" id="GO:0005829">
    <property type="term" value="C:cytosol"/>
    <property type="evidence" value="ECO:0007669"/>
    <property type="project" value="TreeGrafter"/>
</dbReference>
<dbReference type="GO" id="GO:0000028">
    <property type="term" value="P:ribosomal small subunit assembly"/>
    <property type="evidence" value="ECO:0007669"/>
    <property type="project" value="TreeGrafter"/>
</dbReference>
<dbReference type="GO" id="GO:0006412">
    <property type="term" value="P:translation"/>
    <property type="evidence" value="ECO:0007669"/>
    <property type="project" value="TreeGrafter"/>
</dbReference>
<dbReference type="CDD" id="cd01734">
    <property type="entry name" value="YlxS_C"/>
    <property type="match status" value="1"/>
</dbReference>
<dbReference type="Gene3D" id="3.30.300.70">
    <property type="entry name" value="RimP-like superfamily, N-terminal"/>
    <property type="match status" value="1"/>
</dbReference>
<dbReference type="HAMAP" id="MF_01077">
    <property type="entry name" value="RimP"/>
    <property type="match status" value="1"/>
</dbReference>
<dbReference type="InterPro" id="IPR003728">
    <property type="entry name" value="Ribosome_maturation_RimP"/>
</dbReference>
<dbReference type="InterPro" id="IPR028998">
    <property type="entry name" value="RimP_C"/>
</dbReference>
<dbReference type="InterPro" id="IPR036847">
    <property type="entry name" value="RimP_C_sf"/>
</dbReference>
<dbReference type="InterPro" id="IPR028989">
    <property type="entry name" value="RimP_N"/>
</dbReference>
<dbReference type="InterPro" id="IPR035956">
    <property type="entry name" value="RimP_N_sf"/>
</dbReference>
<dbReference type="NCBIfam" id="NF000929">
    <property type="entry name" value="PRK00092.2-1"/>
    <property type="match status" value="1"/>
</dbReference>
<dbReference type="NCBIfam" id="NF011235">
    <property type="entry name" value="PRK14642.1"/>
    <property type="match status" value="1"/>
</dbReference>
<dbReference type="PANTHER" id="PTHR33867">
    <property type="entry name" value="RIBOSOME MATURATION FACTOR RIMP"/>
    <property type="match status" value="1"/>
</dbReference>
<dbReference type="PANTHER" id="PTHR33867:SF1">
    <property type="entry name" value="RIBOSOME MATURATION FACTOR RIMP"/>
    <property type="match status" value="1"/>
</dbReference>
<dbReference type="Pfam" id="PF02576">
    <property type="entry name" value="RimP_N"/>
    <property type="match status" value="1"/>
</dbReference>
<dbReference type="SUPFAM" id="SSF74942">
    <property type="entry name" value="YhbC-like, C-terminal domain"/>
    <property type="match status" value="1"/>
</dbReference>
<dbReference type="SUPFAM" id="SSF75420">
    <property type="entry name" value="YhbC-like, N-terminal domain"/>
    <property type="match status" value="1"/>
</dbReference>
<keyword id="KW-0963">Cytoplasm</keyword>
<keyword id="KW-0690">Ribosome biogenesis</keyword>
<gene>
    <name evidence="1" type="primary">rimP</name>
    <name type="ordered locus">Aave_3385</name>
</gene>
<comment type="function">
    <text evidence="1">Required for maturation of 30S ribosomal subunits.</text>
</comment>
<comment type="subcellular location">
    <subcellularLocation>
        <location evidence="1">Cytoplasm</location>
    </subcellularLocation>
</comment>
<comment type="similarity">
    <text evidence="1">Belongs to the RimP family.</text>
</comment>